<reference key="1">
    <citation type="journal article" date="2005" name="Dokl. Biochem. Biophys.">
        <title>Identification and cloning of the gene encoding pyrophosphate-dependent 6-phosphofructokinase of Methylomonas methanica.</title>
        <authorList>
            <person name="Reshetnikov A.S."/>
            <person name="Mustakhimov I.I."/>
            <person name="Khmelenina V.N."/>
            <person name="Beschastny A.P."/>
            <person name="Trotsenko Y.A."/>
        </authorList>
    </citation>
    <scope>NUCLEOTIDE SEQUENCE [GENOMIC DNA]</scope>
    <scope>FUNCTION</scope>
    <scope>CATALYTIC ACTIVITY</scope>
    <scope>BIOPHYSICOCHEMICAL PROPERTIES</scope>
    <source>
        <strain>12</strain>
    </source>
</reference>
<reference key="2">
    <citation type="journal article" date="1992" name="Biochemistry (Mosc.)">
        <title>Purification and properties of pyrophosphate-dependent phosphofructokinase of obligate methanotroph Methylomonas methanica.</title>
        <authorList>
            <person name="Beschastny A.P."/>
            <person name="Sokolov A.P."/>
            <person name="Khmelenina V.N."/>
            <person name="Trotsenko Y.A."/>
        </authorList>
    </citation>
    <scope>FUNCTION</scope>
    <scope>CATALYTIC ACTIVITY</scope>
    <scope>BIOPHYSICOCHEMICAL PROPERTIES</scope>
    <scope>SUBUNIT</scope>
</reference>
<accession>Q3KSV5</accession>
<proteinExistence type="evidence at protein level"/>
<feature type="chain" id="PRO_0000429707" description="Pyrophosphate--fructose 6-phosphate 1-phosphotransferase">
    <location>
        <begin position="1"/>
        <end position="409"/>
    </location>
</feature>
<feature type="active site" description="Proton acceptor" evidence="1">
    <location>
        <position position="153"/>
    </location>
</feature>
<feature type="binding site" evidence="1">
    <location>
        <position position="14"/>
    </location>
    <ligand>
        <name>diphosphate</name>
        <dbReference type="ChEBI" id="CHEBI:33019"/>
    </ligand>
</feature>
<feature type="binding site" evidence="1">
    <location>
        <position position="123"/>
    </location>
    <ligand>
        <name>Mg(2+)</name>
        <dbReference type="ChEBI" id="CHEBI:18420"/>
        <note>catalytic</note>
    </ligand>
</feature>
<feature type="binding site" evidence="1">
    <location>
        <begin position="151"/>
        <end position="153"/>
    </location>
    <ligand>
        <name>substrate</name>
    </ligand>
</feature>
<feature type="binding site" evidence="1">
    <location>
        <begin position="196"/>
        <end position="198"/>
    </location>
    <ligand>
        <name>substrate</name>
    </ligand>
</feature>
<feature type="binding site" evidence="1">
    <location>
        <position position="268"/>
    </location>
    <ligand>
        <name>substrate</name>
    </ligand>
</feature>
<feature type="binding site" evidence="1">
    <location>
        <begin position="325"/>
        <end position="328"/>
    </location>
    <ligand>
        <name>substrate</name>
    </ligand>
</feature>
<feature type="site" description="Important for catalytic activity and substrate specificity; stabilizes the transition state when the phosphoryl donor is PPi; prevents ATP from binding by mimicking the alpha-phosphate group of ATP" evidence="1">
    <location>
        <position position="124"/>
    </location>
</feature>
<feature type="site" description="Important for catalytic activity; stabilizes the transition state when the phosphoryl donor is PPi" evidence="1">
    <location>
        <position position="150"/>
    </location>
</feature>
<dbReference type="EC" id="2.7.1.90" evidence="1"/>
<dbReference type="EMBL" id="AY957402">
    <property type="protein sequence ID" value="AAY28468.1"/>
    <property type="molecule type" value="Genomic_DNA"/>
</dbReference>
<dbReference type="SMR" id="Q3KSV5"/>
<dbReference type="UniPathway" id="UPA00109">
    <property type="reaction ID" value="UER00182"/>
</dbReference>
<dbReference type="GO" id="GO:0005737">
    <property type="term" value="C:cytoplasm"/>
    <property type="evidence" value="ECO:0007669"/>
    <property type="project" value="UniProtKB-SubCell"/>
</dbReference>
<dbReference type="GO" id="GO:0003872">
    <property type="term" value="F:6-phosphofructokinase activity"/>
    <property type="evidence" value="ECO:0007669"/>
    <property type="project" value="UniProtKB-UniRule"/>
</dbReference>
<dbReference type="GO" id="GO:0047334">
    <property type="term" value="F:diphosphate-fructose-6-phosphate 1-phosphotransferase activity"/>
    <property type="evidence" value="ECO:0007669"/>
    <property type="project" value="UniProtKB-EC"/>
</dbReference>
<dbReference type="GO" id="GO:0046872">
    <property type="term" value="F:metal ion binding"/>
    <property type="evidence" value="ECO:0007669"/>
    <property type="project" value="UniProtKB-KW"/>
</dbReference>
<dbReference type="GO" id="GO:0006002">
    <property type="term" value="P:fructose 6-phosphate metabolic process"/>
    <property type="evidence" value="ECO:0007669"/>
    <property type="project" value="InterPro"/>
</dbReference>
<dbReference type="Gene3D" id="3.40.50.450">
    <property type="match status" value="1"/>
</dbReference>
<dbReference type="HAMAP" id="MF_01977">
    <property type="entry name" value="Phosphofructokinase_II_P"/>
    <property type="match status" value="1"/>
</dbReference>
<dbReference type="InterPro" id="IPR022953">
    <property type="entry name" value="ATP_PFK"/>
</dbReference>
<dbReference type="InterPro" id="IPR050929">
    <property type="entry name" value="PFKA"/>
</dbReference>
<dbReference type="InterPro" id="IPR000023">
    <property type="entry name" value="Phosphofructokinase_dom"/>
</dbReference>
<dbReference type="InterPro" id="IPR035966">
    <property type="entry name" value="PKF_sf"/>
</dbReference>
<dbReference type="InterPro" id="IPR011405">
    <property type="entry name" value="PPi-PFK_SMc01852"/>
</dbReference>
<dbReference type="NCBIfam" id="NF005121">
    <property type="entry name" value="PRK06555.1"/>
    <property type="match status" value="1"/>
</dbReference>
<dbReference type="PANTHER" id="PTHR45770">
    <property type="entry name" value="ATP-DEPENDENT 6-PHOSPHOFRUCTOKINASE 1"/>
    <property type="match status" value="1"/>
</dbReference>
<dbReference type="Pfam" id="PF00365">
    <property type="entry name" value="PFK"/>
    <property type="match status" value="1"/>
</dbReference>
<dbReference type="PIRSF" id="PIRSF036484">
    <property type="entry name" value="PPi-PFK_SMc01852"/>
    <property type="match status" value="1"/>
</dbReference>
<dbReference type="PRINTS" id="PR00476">
    <property type="entry name" value="PHFRCTKINASE"/>
</dbReference>
<dbReference type="SUPFAM" id="SSF53784">
    <property type="entry name" value="Phosphofructokinase"/>
    <property type="match status" value="1"/>
</dbReference>
<protein>
    <recommendedName>
        <fullName evidence="1">Pyrophosphate--fructose 6-phosphate 1-phosphotransferase</fullName>
        <ecNumber evidence="1">2.7.1.90</ecNumber>
    </recommendedName>
    <alternativeName>
        <fullName evidence="1">6-phosphofructokinase, pyrophosphate dependent</fullName>
    </alternativeName>
    <alternativeName>
        <fullName evidence="1">PPi-dependent phosphofructokinase</fullName>
        <shortName evidence="1">PPi-PFK</shortName>
    </alternativeName>
    <alternativeName>
        <fullName evidence="1">Pyrophosphate-dependent 6-phosphofructose-1-kinase</fullName>
    </alternativeName>
</protein>
<name>PFP_METMH</name>
<evidence type="ECO:0000255" key="1">
    <source>
        <dbReference type="HAMAP-Rule" id="MF_01977"/>
    </source>
</evidence>
<evidence type="ECO:0000269" key="2">
    <source>
    </source>
</evidence>
<evidence type="ECO:0000269" key="3">
    <source ref="2"/>
</evidence>
<keyword id="KW-0963">Cytoplasm</keyword>
<keyword id="KW-0324">Glycolysis</keyword>
<keyword id="KW-0418">Kinase</keyword>
<keyword id="KW-0460">Magnesium</keyword>
<keyword id="KW-0479">Metal-binding</keyword>
<keyword id="KW-0808">Transferase</keyword>
<sequence length="409" mass="44542">MNKPKKVAILTAGGLAPCLNSAIGSLIERYTEIDPSIEIICYRGGYKGLLLGDSYPVTAEVRKKAGVLQRFGGSVIGNSRVKLTNVKDCVKRGLVKEGEDPQKVAADQLVKDGVDILHTIGGDDTNTAAADLAAFLARNNYGLTVIGLPKTVDNDVFPIKQSLGAWTAAEQGARYFMNVVAENNANPRMLIVHEVMGRNCGWLTAATAQEYRKLLDRAEWLPELGLTRESYEVHAVFVPEMAIDLEAEAKRLREVMDKVDCVNIFVSEGAGVEAIVAEMQAKGQEVPRDAFGHIKLDAVNPGKWFGEQFAQMIGAEKTLVQKSGYFARASASNVDDMRLIKSCADLAVECAFRRESGVIGHDEDNGNVLRAIEFPRIKGGKPFNIDTDWFNSMLSEIGQPKGGKVEVSH</sequence>
<organism>
    <name type="scientific">Methylomonas methanica</name>
    <dbReference type="NCBI Taxonomy" id="421"/>
    <lineage>
        <taxon>Bacteria</taxon>
        <taxon>Pseudomonadati</taxon>
        <taxon>Pseudomonadota</taxon>
        <taxon>Gammaproteobacteria</taxon>
        <taxon>Methylococcales</taxon>
        <taxon>Methylococcaceae</taxon>
        <taxon>Methylomonas</taxon>
    </lineage>
</organism>
<gene>
    <name evidence="1" type="primary">pfp</name>
</gene>
<comment type="function">
    <text evidence="1 2 3">Catalyzes the phosphorylation of D-fructose 6-phosphate, the first committing step of glycolysis. Uses inorganic phosphate (PPi) as phosphoryl donor instead of ATP like common ATP-dependent phosphofructokinases (ATP-PFKs), which renders the reaction reversible, and can thus function both in glycolysis and gluconeogenesis. Consistently, PPi-PFK can replace the enzymes of both the forward (ATP-PFK) and reverse (fructose-bisphosphatase (FBPase)) reactions.</text>
</comment>
<comment type="catalytic activity">
    <reaction evidence="1 2 3">
        <text>beta-D-fructose 6-phosphate + diphosphate = beta-D-fructose 1,6-bisphosphate + phosphate + H(+)</text>
        <dbReference type="Rhea" id="RHEA:13613"/>
        <dbReference type="ChEBI" id="CHEBI:15378"/>
        <dbReference type="ChEBI" id="CHEBI:32966"/>
        <dbReference type="ChEBI" id="CHEBI:33019"/>
        <dbReference type="ChEBI" id="CHEBI:43474"/>
        <dbReference type="ChEBI" id="CHEBI:57634"/>
        <dbReference type="EC" id="2.7.1.90"/>
    </reaction>
</comment>
<comment type="cofactor">
    <cofactor evidence="1">
        <name>Mg(2+)</name>
        <dbReference type="ChEBI" id="CHEBI:18420"/>
    </cofactor>
</comment>
<comment type="activity regulation">
    <text evidence="1">Non-allosteric.</text>
</comment>
<comment type="biophysicochemical properties">
    <kinetics>
        <KM evidence="2 3">1.7 mM for phosphate</KM>
        <KM evidence="2 3">0.051 mM for diphosphate</KM>
        <KM evidence="2 3">0.36 mM for fructose 6-phosphate</KM>
        <KM evidence="2 3">0.1 mM for fructose 1,6-bisphosphate</KM>
        <Vmax evidence="2 3">840.0 umol/min/mg enzyme for the forward reaction</Vmax>
        <Vmax evidence="2 3">850.0 umol/min/mg enzyme for the reverse reaction</Vmax>
    </kinetics>
    <phDependence>
        <text evidence="2 3">Optimum pH is 8.0.</text>
    </phDependence>
    <temperatureDependence>
        <text evidence="2 3">Optimum temperature is 40 degrees Celsius.</text>
    </temperatureDependence>
</comment>
<comment type="pathway">
    <text evidence="1">Carbohydrate degradation; glycolysis; D-glyceraldehyde 3-phosphate and glycerone phosphate from D-glucose: step 3/4.</text>
</comment>
<comment type="subunit">
    <text evidence="3">Homodimer.</text>
</comment>
<comment type="subcellular location">
    <subcellularLocation>
        <location evidence="1">Cytoplasm</location>
    </subcellularLocation>
</comment>
<comment type="similarity">
    <text evidence="1">Belongs to the phosphofructokinase type A (PFKA) family. PPi-dependent PFK group II subfamily. Clade 'P' sub-subfamily.</text>
</comment>